<gene>
    <name evidence="7 8 13" type="primary">serB2</name>
    <name evidence="13" type="ordered locus">Rv3042c</name>
</gene>
<accession>O53289</accession>
<accession>I6X638</accession>
<keyword id="KW-0028">Amino-acid biosynthesis</keyword>
<keyword id="KW-1035">Host cytoplasm</keyword>
<keyword id="KW-0378">Hydrolase</keyword>
<keyword id="KW-0460">Magnesium</keyword>
<keyword id="KW-0479">Metal-binding</keyword>
<keyword id="KW-1185">Reference proteome</keyword>
<keyword id="KW-0964">Secreted</keyword>
<keyword id="KW-0718">Serine biosynthesis</keyword>
<dbReference type="EC" id="3.1.3.3" evidence="4 5"/>
<dbReference type="EC" id="3.1.3.16" evidence="6"/>
<dbReference type="EMBL" id="AL123456">
    <property type="protein sequence ID" value="CCP45851.1"/>
    <property type="molecule type" value="Genomic_DNA"/>
</dbReference>
<dbReference type="RefSeq" id="NP_217558.1">
    <property type="nucleotide sequence ID" value="NC_000962.3"/>
</dbReference>
<dbReference type="SASBDB" id="O53289"/>
<dbReference type="SMR" id="O53289"/>
<dbReference type="FunCoup" id="O53289">
    <property type="interactions" value="197"/>
</dbReference>
<dbReference type="STRING" id="83332.Rv3042c"/>
<dbReference type="ChEMBL" id="CHEMBL5465371"/>
<dbReference type="PaxDb" id="83332-Rv3042c"/>
<dbReference type="DNASU" id="887815"/>
<dbReference type="GeneID" id="887815"/>
<dbReference type="KEGG" id="mtu:Rv3042c"/>
<dbReference type="KEGG" id="mtv:RVBD_3042c"/>
<dbReference type="PATRIC" id="fig|83332.111.peg.3389"/>
<dbReference type="TubercuList" id="Rv3042c"/>
<dbReference type="eggNOG" id="COG0560">
    <property type="taxonomic scope" value="Bacteria"/>
</dbReference>
<dbReference type="eggNOG" id="COG3830">
    <property type="taxonomic scope" value="Bacteria"/>
</dbReference>
<dbReference type="InParanoid" id="O53289"/>
<dbReference type="OrthoDB" id="9792539at2"/>
<dbReference type="PhylomeDB" id="O53289"/>
<dbReference type="BRENDA" id="3.1.3.3">
    <property type="organism ID" value="3445"/>
</dbReference>
<dbReference type="UniPathway" id="UPA00135">
    <property type="reaction ID" value="UER00198"/>
</dbReference>
<dbReference type="Proteomes" id="UP000001584">
    <property type="component" value="Chromosome"/>
</dbReference>
<dbReference type="GO" id="GO:0005737">
    <property type="term" value="C:cytoplasm"/>
    <property type="evidence" value="ECO:0000318"/>
    <property type="project" value="GO_Central"/>
</dbReference>
<dbReference type="GO" id="GO:0005576">
    <property type="term" value="C:extracellular region"/>
    <property type="evidence" value="ECO:0007669"/>
    <property type="project" value="UniProtKB-SubCell"/>
</dbReference>
<dbReference type="GO" id="GO:0044164">
    <property type="term" value="C:host cell cytosol"/>
    <property type="evidence" value="ECO:0007669"/>
    <property type="project" value="UniProtKB-SubCell"/>
</dbReference>
<dbReference type="GO" id="GO:0016597">
    <property type="term" value="F:amino acid binding"/>
    <property type="evidence" value="ECO:0000314"/>
    <property type="project" value="UniProtKB"/>
</dbReference>
<dbReference type="GO" id="GO:0036424">
    <property type="term" value="F:L-phosphoserine phosphatase activity"/>
    <property type="evidence" value="ECO:0000314"/>
    <property type="project" value="UniProtKB"/>
</dbReference>
<dbReference type="GO" id="GO:0000287">
    <property type="term" value="F:magnesium ion binding"/>
    <property type="evidence" value="ECO:0000318"/>
    <property type="project" value="GO_Central"/>
</dbReference>
<dbReference type="GO" id="GO:0004722">
    <property type="term" value="F:protein serine/threonine phosphatase activity"/>
    <property type="evidence" value="ECO:0000314"/>
    <property type="project" value="UniProtKB"/>
</dbReference>
<dbReference type="GO" id="GO:0016311">
    <property type="term" value="P:dephosphorylation"/>
    <property type="evidence" value="ECO:0000314"/>
    <property type="project" value="UniProtKB"/>
</dbReference>
<dbReference type="GO" id="GO:0006564">
    <property type="term" value="P:L-serine biosynthetic process"/>
    <property type="evidence" value="ECO:0000318"/>
    <property type="project" value="GO_Central"/>
</dbReference>
<dbReference type="GO" id="GO:0006470">
    <property type="term" value="P:protein dephosphorylation"/>
    <property type="evidence" value="ECO:0000314"/>
    <property type="project" value="UniProtKB"/>
</dbReference>
<dbReference type="GO" id="GO:0141032">
    <property type="term" value="P:symbiont-mediated perturbation of host actin cytoskeleton via actin filament reorganization"/>
    <property type="evidence" value="ECO:0000269"/>
    <property type="project" value="SigSci"/>
</dbReference>
<dbReference type="CDD" id="cd04870">
    <property type="entry name" value="ACT_PSP_1"/>
    <property type="match status" value="1"/>
</dbReference>
<dbReference type="CDD" id="cd04871">
    <property type="entry name" value="ACT_PSP_2"/>
    <property type="match status" value="1"/>
</dbReference>
<dbReference type="CDD" id="cd07500">
    <property type="entry name" value="HAD_PSP"/>
    <property type="match status" value="1"/>
</dbReference>
<dbReference type="FunFam" id="3.40.50.1000:FF:000041">
    <property type="entry name" value="Phosphoserine phosphatase SerB"/>
    <property type="match status" value="1"/>
</dbReference>
<dbReference type="Gene3D" id="3.30.70.260">
    <property type="match status" value="2"/>
</dbReference>
<dbReference type="Gene3D" id="3.40.50.1000">
    <property type="entry name" value="HAD superfamily/HAD-like"/>
    <property type="match status" value="1"/>
</dbReference>
<dbReference type="InterPro" id="IPR045865">
    <property type="entry name" value="ACT-like_dom_sf"/>
</dbReference>
<dbReference type="InterPro" id="IPR002912">
    <property type="entry name" value="ACT_dom"/>
</dbReference>
<dbReference type="InterPro" id="IPR050582">
    <property type="entry name" value="HAD-like_SerB"/>
</dbReference>
<dbReference type="InterPro" id="IPR036412">
    <property type="entry name" value="HAD-like_sf"/>
</dbReference>
<dbReference type="InterPro" id="IPR023214">
    <property type="entry name" value="HAD_sf"/>
</dbReference>
<dbReference type="InterPro" id="IPR004469">
    <property type="entry name" value="PSP"/>
</dbReference>
<dbReference type="InterPro" id="IPR049148">
    <property type="entry name" value="PSP_ACT"/>
</dbReference>
<dbReference type="NCBIfam" id="TIGR01488">
    <property type="entry name" value="HAD-SF-IB"/>
    <property type="match status" value="1"/>
</dbReference>
<dbReference type="NCBIfam" id="TIGR00338">
    <property type="entry name" value="serB"/>
    <property type="match status" value="1"/>
</dbReference>
<dbReference type="PANTHER" id="PTHR43344">
    <property type="entry name" value="PHOSPHOSERINE PHOSPHATASE"/>
    <property type="match status" value="1"/>
</dbReference>
<dbReference type="PANTHER" id="PTHR43344:SF2">
    <property type="entry name" value="PHOSPHOSERINE PHOSPHATASE"/>
    <property type="match status" value="1"/>
</dbReference>
<dbReference type="Pfam" id="PF13740">
    <property type="entry name" value="ACT_6"/>
    <property type="match status" value="1"/>
</dbReference>
<dbReference type="Pfam" id="PF21086">
    <property type="entry name" value="ACT_PSP_2"/>
    <property type="match status" value="1"/>
</dbReference>
<dbReference type="Pfam" id="PF12710">
    <property type="entry name" value="HAD"/>
    <property type="match status" value="1"/>
</dbReference>
<dbReference type="SFLD" id="SFLDG01137">
    <property type="entry name" value="C1.6.1:_Phosphoserine_Phosphat"/>
    <property type="match status" value="1"/>
</dbReference>
<dbReference type="SFLD" id="SFLDF00029">
    <property type="entry name" value="phosphoserine_phosphatase"/>
    <property type="match status" value="1"/>
</dbReference>
<dbReference type="SUPFAM" id="SSF55021">
    <property type="entry name" value="ACT-like"/>
    <property type="match status" value="1"/>
</dbReference>
<dbReference type="SUPFAM" id="SSF56784">
    <property type="entry name" value="HAD-like"/>
    <property type="match status" value="1"/>
</dbReference>
<dbReference type="PROSITE" id="PS51671">
    <property type="entry name" value="ACT"/>
    <property type="match status" value="1"/>
</dbReference>
<evidence type="ECO:0000250" key="1">
    <source>
        <dbReference type="UniProtKB" id="Q58989"/>
    </source>
</evidence>
<evidence type="ECO:0000255" key="2">
    <source>
        <dbReference type="PROSITE-ProRule" id="PRU01007"/>
    </source>
</evidence>
<evidence type="ECO:0000269" key="3">
    <source>
    </source>
</evidence>
<evidence type="ECO:0000269" key="4">
    <source>
    </source>
</evidence>
<evidence type="ECO:0000269" key="5">
    <source>
    </source>
</evidence>
<evidence type="ECO:0000269" key="6">
    <source>
    </source>
</evidence>
<evidence type="ECO:0000303" key="7">
    <source>
    </source>
</evidence>
<evidence type="ECO:0000303" key="8">
    <source>
    </source>
</evidence>
<evidence type="ECO:0000305" key="9"/>
<evidence type="ECO:0000305" key="10">
    <source>
    </source>
</evidence>
<evidence type="ECO:0000305" key="11">
    <source>
    </source>
</evidence>
<evidence type="ECO:0000305" key="12">
    <source>
    </source>
</evidence>
<evidence type="ECO:0000312" key="13">
    <source>
        <dbReference type="EMBL" id="CCP45851.1"/>
    </source>
</evidence>
<organism>
    <name type="scientific">Mycobacterium tuberculosis (strain ATCC 25618 / H37Rv)</name>
    <dbReference type="NCBI Taxonomy" id="83332"/>
    <lineage>
        <taxon>Bacteria</taxon>
        <taxon>Bacillati</taxon>
        <taxon>Actinomycetota</taxon>
        <taxon>Actinomycetes</taxon>
        <taxon>Mycobacteriales</taxon>
        <taxon>Mycobacteriaceae</taxon>
        <taxon>Mycobacterium</taxon>
        <taxon>Mycobacterium tuberculosis complex</taxon>
    </lineage>
</organism>
<sequence length="409" mass="43059">MPAKVSVLITVTGMDQPGVTSALFEVLAQHGVELLNVEQVVIRGRLTLGVLVSCPLDVADGTALRDDVAAAIHGVGLDVAIERSDDLPIIRQPSTHTIFVLGRPITAGAFSAVARGVAALGVNIDFIRGISDYPVTGLELRVSVPPGCVGPLQIALTKVAAEEHVDVAVEDYGLAWRTKRLIVFDVDSTLVQGEVIEMLAARAGAQGQVAAITEAAMRGELDFAESLQRRVATLAGLPATVIDDVAEQLELMPGARTTIRTLRRLGFRCGVVSGGFRRIIEPLARELMLDFVASNELEIVDGILTGRVVGPIVDRPGKAKALRDFASQYGVPMEQTVAVGDGANDIDMLGAAGLGIAFNAKPALREVADASLSHPYLDTVLFLLGVTRGEIEAADAGDCGVRRVEIPAD</sequence>
<protein>
    <recommendedName>
        <fullName evidence="7 8">Phosphoserine phosphatase SerB2</fullName>
        <shortName evidence="7 8">PSP</shortName>
        <shortName>PSPase</shortName>
        <ecNumber evidence="4 5">3.1.3.3</ecNumber>
    </recommendedName>
    <alternativeName>
        <fullName evidence="8">O-phosphoserine phosphohydrolase</fullName>
    </alternativeName>
    <alternativeName>
        <fullName evidence="12">Protein-serine/threonine phosphatase</fullName>
        <ecNumber evidence="6">3.1.3.16</ecNumber>
    </alternativeName>
</protein>
<name>SERB2_MYCTU</name>
<proteinExistence type="evidence at protein level"/>
<feature type="chain" id="PRO_0000437672" description="Phosphoserine phosphatase SerB2">
    <location>
        <begin position="1"/>
        <end position="409"/>
    </location>
</feature>
<feature type="domain" description="ACT 1" evidence="2">
    <location>
        <begin position="8"/>
        <end position="86"/>
    </location>
</feature>
<feature type="domain" description="ACT 2" evidence="11">
    <location>
        <begin position="102"/>
        <end position="174"/>
    </location>
</feature>
<feature type="active site" description="Nucleophile" evidence="1">
    <location>
        <position position="185"/>
    </location>
</feature>
<feature type="active site" description="Proton donor" evidence="1">
    <location>
        <position position="187"/>
    </location>
</feature>
<feature type="binding site" evidence="1">
    <location>
        <position position="185"/>
    </location>
    <ligand>
        <name>Mg(2+)</name>
        <dbReference type="ChEBI" id="CHEBI:18420"/>
    </ligand>
</feature>
<feature type="binding site" evidence="1">
    <location>
        <position position="187"/>
    </location>
    <ligand>
        <name>Mg(2+)</name>
        <dbReference type="ChEBI" id="CHEBI:18420"/>
    </ligand>
</feature>
<feature type="binding site" evidence="1">
    <location>
        <position position="194"/>
    </location>
    <ligand>
        <name>substrate</name>
    </ligand>
</feature>
<feature type="binding site" evidence="1">
    <location>
        <position position="230"/>
    </location>
    <ligand>
        <name>substrate</name>
    </ligand>
</feature>
<feature type="binding site" evidence="1">
    <location>
        <begin position="273"/>
        <end position="274"/>
    </location>
    <ligand>
        <name>substrate</name>
    </ligand>
</feature>
<feature type="binding site" evidence="1">
    <location>
        <position position="318"/>
    </location>
    <ligand>
        <name>substrate</name>
    </ligand>
</feature>
<feature type="binding site" evidence="1">
    <location>
        <position position="341"/>
    </location>
    <ligand>
        <name>Mg(2+)</name>
        <dbReference type="ChEBI" id="CHEBI:18420"/>
    </ligand>
</feature>
<feature type="binding site" evidence="1">
    <location>
        <position position="344"/>
    </location>
    <ligand>
        <name>substrate</name>
    </ligand>
</feature>
<feature type="mutagenesis site" description="Does not bind L-serine and correspondingly no oligomeric transitions is observed in the presence of L-serine." evidence="5">
    <original>G</original>
    <variation>A</variation>
    <location>
        <position position="18"/>
    </location>
</feature>
<feature type="mutagenesis site" description="Does not bind L-serine and correspondingly no oligomeric transitions is observed in the presence of L-serine." evidence="5">
    <original>G</original>
    <variation>A</variation>
    <location>
        <position position="108"/>
    </location>
</feature>
<feature type="mutagenesis site" description="Completely abolishes enzymatic activity." evidence="4">
    <original>D</original>
    <variation>G</variation>
    <location>
        <position position="185"/>
    </location>
</feature>
<feature type="mutagenesis site" description="Completely abolishes enzymatic activity." evidence="5">
    <original>D</original>
    <variation>N</variation>
    <location>
        <position position="185"/>
    </location>
</feature>
<feature type="mutagenesis site" description="Decreases enzymatic activity by 50%." evidence="4">
    <original>V</original>
    <variation>Q</variation>
    <location>
        <position position="186"/>
    </location>
</feature>
<feature type="mutagenesis site" description="Decreases enzymatic activity by 15%." evidence="5">
    <original>D</original>
    <variation>N</variation>
    <location>
        <position position="187"/>
    </location>
</feature>
<feature type="mutagenesis site" description="No effect on enzymatic activity." evidence="4">
    <original>S</original>
    <variation>A</variation>
    <location>
        <position position="188"/>
    </location>
</feature>
<feature type="mutagenesis site" description="Completely abolishes enzymatic activity (PubMed:25521849). Decreases enzymatic activity by 60% (PubMed:25037224)." evidence="4 5">
    <original>S</original>
    <variation>A</variation>
    <location>
        <position position="273"/>
    </location>
</feature>
<feature type="mutagenesis site" description="Decreases enzymatic activity by 50%." evidence="5">
    <original>K</original>
    <variation>A</variation>
    <location>
        <position position="318"/>
    </location>
</feature>
<feature type="mutagenesis site" description="Completely abolishes enzymatic activity." evidence="4">
    <original>K</original>
    <variation>E</variation>
    <location>
        <position position="318"/>
    </location>
</feature>
<feature type="mutagenesis site" description="Decreases enzymatic activity by 80%." evidence="4">
    <original>D</original>
    <variation>G</variation>
    <location>
        <position position="341"/>
    </location>
</feature>
<feature type="mutagenesis site" description="Decreases enzymatic activity by 85%. Completely abolishes enzymatic activity, does not elicit cytoskeletal rearrangements, and does not suppress IL-8 production after TNF-alpha stimulation; when associated with N-345." evidence="5">
    <original>D</original>
    <variation>N</variation>
    <location>
        <position position="341"/>
    </location>
</feature>
<feature type="mutagenesis site" description="Decreases enzymatic activity by 55%. Completely abolishes enzymatic activity, does not elicit cytoskeletal rearrangements, and does not suppress IL-8 production after TNF-alpha stimulation; when associated with N-341." evidence="5">
    <original>D</original>
    <variation>N</variation>
    <location>
        <position position="345"/>
    </location>
</feature>
<comment type="function">
    <text evidence="4 5">Catalyzes the dephosphorylation of O-phospho-L-serine into L-serine, a step in the L-serine biosynthetic pathway (PubMed:25037224, PubMed:25521849). Exhibits high specificity for L-phosphoserine compared to substrates like L-phosphothreonine (5% relative activity) and L-phosphotyrosine (1.7% relative activity) (PubMed:25521849).</text>
</comment>
<comment type="function">
    <text evidence="5 6">In the host, induces significant cytoskeleton rearrangements through cofilin dephosphorylation and its subsequent activation, and affects the expression of genes that regulate actin dynamics. It specifically interacts with HSP90, HSP70 and HSP27 that block apoptotic pathways but not with other HSPs. Also interacts with GAPDH. It actively dephosphorylates MAP kinase p38 and NF-kappa B p65 (specifically at Ser-536) that play crucial roles in inflammatory and immune responses. This in turn leads to down-regulation of Interleukin 8, a chemotactic and inflammatory cytokine. Thus might help the pathogen to evade the host's immune response (PubMed:26984196). Exogenous addition of purified SerB2 protein to human THP-1 cells (that can be differentiated into macrophage-like cells) induces microtubule rearrangements; the phosphatase activity is co-related to the elicited rearrangements, while addition of the ACT-domains alone elicits no rearrangements (PubMed:25521849).</text>
</comment>
<comment type="catalytic activity">
    <reaction evidence="4 5">
        <text>O-phospho-L-serine + H2O = L-serine + phosphate</text>
        <dbReference type="Rhea" id="RHEA:21208"/>
        <dbReference type="ChEBI" id="CHEBI:15377"/>
        <dbReference type="ChEBI" id="CHEBI:33384"/>
        <dbReference type="ChEBI" id="CHEBI:43474"/>
        <dbReference type="ChEBI" id="CHEBI:57524"/>
        <dbReference type="EC" id="3.1.3.3"/>
    </reaction>
</comment>
<comment type="catalytic activity">
    <reaction evidence="4 5">
        <text>O-phospho-D-serine + H2O = D-serine + phosphate</text>
        <dbReference type="Rhea" id="RHEA:24873"/>
        <dbReference type="ChEBI" id="CHEBI:15377"/>
        <dbReference type="ChEBI" id="CHEBI:35247"/>
        <dbReference type="ChEBI" id="CHEBI:43474"/>
        <dbReference type="ChEBI" id="CHEBI:58680"/>
        <dbReference type="EC" id="3.1.3.3"/>
    </reaction>
</comment>
<comment type="catalytic activity">
    <reaction evidence="6">
        <text>O-phospho-L-seryl-[protein] + H2O = L-seryl-[protein] + phosphate</text>
        <dbReference type="Rhea" id="RHEA:20629"/>
        <dbReference type="Rhea" id="RHEA-COMP:9863"/>
        <dbReference type="Rhea" id="RHEA-COMP:11604"/>
        <dbReference type="ChEBI" id="CHEBI:15377"/>
        <dbReference type="ChEBI" id="CHEBI:29999"/>
        <dbReference type="ChEBI" id="CHEBI:43474"/>
        <dbReference type="ChEBI" id="CHEBI:83421"/>
        <dbReference type="EC" id="3.1.3.16"/>
    </reaction>
</comment>
<comment type="catalytic activity">
    <reaction evidence="6">
        <text>O-phospho-L-threonyl-[protein] + H2O = L-threonyl-[protein] + phosphate</text>
        <dbReference type="Rhea" id="RHEA:47004"/>
        <dbReference type="Rhea" id="RHEA-COMP:11060"/>
        <dbReference type="Rhea" id="RHEA-COMP:11605"/>
        <dbReference type="ChEBI" id="CHEBI:15377"/>
        <dbReference type="ChEBI" id="CHEBI:30013"/>
        <dbReference type="ChEBI" id="CHEBI:43474"/>
        <dbReference type="ChEBI" id="CHEBI:61977"/>
        <dbReference type="EC" id="3.1.3.16"/>
    </reaction>
</comment>
<comment type="cofactor">
    <cofactor evidence="4 5">
        <name>Mg(2+)</name>
        <dbReference type="ChEBI" id="CHEBI:18420"/>
    </cofactor>
    <cofactor evidence="4 5">
        <name>Mn(2+)</name>
        <dbReference type="ChEBI" id="CHEBI:29035"/>
    </cofactor>
    <text evidence="1 4 5">Binds 1 Mg(2+) ion per subunit (By similarity). Can also use Mn(2+) (PubMed:25037224, PubMed:25521849).</text>
</comment>
<comment type="activity regulation">
    <text evidence="4 5 6">Clofazimine, a drug being evaluated for XDR and MDR tuberculosis, inhibits SerB2 phosphatase activity and reverses the various functional effects described above and interactions with host proteins (PubMed:26984196). Is inhibited by known PSP inhibitors such as chlorpromazine, DL-AP3 and sodium orthovanadate, but not by okadaic acid (PubMed:25037224, PubMed:25521849). By binding to the ACT domains, amino-acids have various effects on enzyme activity: L-serine and L-glycine act as inhibitors, whereas L-lysine, L-tyrosine and L-phenylalanine are activators (PubMed:25521849). High throughput screen has been performed to identify specific PSP inhibitors with activity against intracellular bacteria; the two best hits identified in this screen, clorobiocin and rosaniline, are bactericidal and kill bacteria in infected macrophages in a dose-dependent manner (PubMed:25037224).</text>
</comment>
<comment type="biophysicochemical properties">
    <kinetics>
        <KM evidence="4">92.68 uM for O-phospho-L-serine</KM>
        <KM evidence="5">135.9 uM for O-phospho-L-serine</KM>
        <Vmax evidence="5">14250.0 nmol/min/mg enzyme</Vmax>
        <text evidence="4 5">kcat is 8.83 min(-1) (PubMed:25037224). kcat is 25400 sec(-1) (PubMed:25521849).</text>
    </kinetics>
    <phDependence>
        <text evidence="4 5">Optimum pH is 7.5 (PubMed:25037224, PubMed:25521849). Activity declines progressively before pH 7.5 and is almost abolished at 6.0 while at higher pH the enzyme remains active till pH 9.0 (PubMed:25521849).</text>
    </phDependence>
    <temperatureDependence>
        <text evidence="5">Optimum temperature is 37 degrees Celsius. Activity declines at higher temperatures and is completely abolished by 50 degrees Celsius.</text>
    </temperatureDependence>
</comment>
<comment type="pathway">
    <text evidence="10">Amino-acid biosynthesis; L-serine biosynthesis; L-serine from 3-phospho-D-glycerate: step 3/3.</text>
</comment>
<comment type="subunit">
    <text evidence="5">Homodimer. The dimeric population shifts to a tetramer in the presence of L-serine, which inactivates the enzyme.</text>
</comment>
<comment type="subcellular location">
    <subcellularLocation>
        <location evidence="6">Secreted</location>
    </subcellularLocation>
    <subcellularLocation>
        <location evidence="6">Host cytoplasm</location>
        <location evidence="6">Host cytosol</location>
    </subcellularLocation>
    <text evidence="6">Is secreted into the cytosol of infected macrophages and is found in bronchoalveolar lavage samples of tuberculosis patients. Co-localizes with host tubulin.</text>
</comment>
<comment type="domain">
    <text evidence="5">Folds into three domains, i.e. two ACT domains occurring in tandem at the N-terminus followed by the classical phosphatase (PSP) domain. The PSP domain alone is capable of hydrolyzing L-phosphoserine, albeit with much reduced efficacy. The ACT domains are involved in amino acid binding and play an important role in modulating enzymatic activity.</text>
</comment>
<comment type="disruption phenotype">
    <text evidence="3">Transposon mutagenesis experiments have identified that SerB2 is essential for the pathogen's viability while SerB1 is not.</text>
</comment>
<comment type="similarity">
    <text evidence="9">Belongs to the HAD-like hydrolase superfamily. SerB family.</text>
</comment>
<reference key="1">
    <citation type="journal article" date="1998" name="Nature">
        <title>Deciphering the biology of Mycobacterium tuberculosis from the complete genome sequence.</title>
        <authorList>
            <person name="Cole S.T."/>
            <person name="Brosch R."/>
            <person name="Parkhill J."/>
            <person name="Garnier T."/>
            <person name="Churcher C.M."/>
            <person name="Harris D.E."/>
            <person name="Gordon S.V."/>
            <person name="Eiglmeier K."/>
            <person name="Gas S."/>
            <person name="Barry C.E. III"/>
            <person name="Tekaia F."/>
            <person name="Badcock K."/>
            <person name="Basham D."/>
            <person name="Brown D."/>
            <person name="Chillingworth T."/>
            <person name="Connor R."/>
            <person name="Davies R.M."/>
            <person name="Devlin K."/>
            <person name="Feltwell T."/>
            <person name="Gentles S."/>
            <person name="Hamlin N."/>
            <person name="Holroyd S."/>
            <person name="Hornsby T."/>
            <person name="Jagels K."/>
            <person name="Krogh A."/>
            <person name="McLean J."/>
            <person name="Moule S."/>
            <person name="Murphy L.D."/>
            <person name="Oliver S."/>
            <person name="Osborne J."/>
            <person name="Quail M.A."/>
            <person name="Rajandream M.A."/>
            <person name="Rogers J."/>
            <person name="Rutter S."/>
            <person name="Seeger K."/>
            <person name="Skelton S."/>
            <person name="Squares S."/>
            <person name="Squares R."/>
            <person name="Sulston J.E."/>
            <person name="Taylor K."/>
            <person name="Whitehead S."/>
            <person name="Barrell B.G."/>
        </authorList>
    </citation>
    <scope>NUCLEOTIDE SEQUENCE [LARGE SCALE GENOMIC DNA]</scope>
    <source>
        <strain>ATCC 25618 / H37Rv</strain>
    </source>
</reference>
<reference key="2">
    <citation type="journal article" date="2003" name="Mol. Microbiol.">
        <title>Genes required for mycobacterial growth defined by high density mutagenesis.</title>
        <authorList>
            <person name="Sassetti C.M."/>
            <person name="Boyd D.H."/>
            <person name="Rubin E.J."/>
        </authorList>
    </citation>
    <scope>DISRUPTION PHENOTYPE</scope>
    <source>
        <strain>H37Rv</strain>
    </source>
</reference>
<reference key="3">
    <citation type="journal article" date="2011" name="Mol. Cell. Proteomics">
        <title>Proteogenomic analysis of Mycobacterium tuberculosis by high resolution mass spectrometry.</title>
        <authorList>
            <person name="Kelkar D.S."/>
            <person name="Kumar D."/>
            <person name="Kumar P."/>
            <person name="Balakrishnan L."/>
            <person name="Muthusamy B."/>
            <person name="Yadav A.K."/>
            <person name="Shrivastava P."/>
            <person name="Marimuthu A."/>
            <person name="Anand S."/>
            <person name="Sundaram H."/>
            <person name="Kingsbury R."/>
            <person name="Harsha H.C."/>
            <person name="Nair B."/>
            <person name="Prasad T.S."/>
            <person name="Chauhan D.S."/>
            <person name="Katoch K."/>
            <person name="Katoch V.M."/>
            <person name="Kumar P."/>
            <person name="Chaerkady R."/>
            <person name="Ramachandran S."/>
            <person name="Dash D."/>
            <person name="Pandey A."/>
        </authorList>
    </citation>
    <scope>IDENTIFICATION BY MASS SPECTROMETRY [LARGE SCALE ANALYSIS]</scope>
    <source>
        <strain>ATCC 25618 / H37Rv</strain>
    </source>
</reference>
<reference key="4">
    <citation type="journal article" date="2014" name="J. Biol. Chem.">
        <title>High throughput screen identifies small molecule inhibitors specific for Mycobacterium tuberculosis phosphoserine phosphatase.</title>
        <authorList>
            <person name="Arora G."/>
            <person name="Tiwari P."/>
            <person name="Mandal R.S."/>
            <person name="Gupta A."/>
            <person name="Sharma D."/>
            <person name="Saha S."/>
            <person name="Singh R."/>
        </authorList>
    </citation>
    <scope>FUNCTION</scope>
    <scope>CATALYTIC ACTIVITY</scope>
    <scope>COFACTOR</scope>
    <scope>BIOPHYSICOCHEMICAL PROPERTIES</scope>
    <scope>SUBSTRATE SPECIFICITY</scope>
    <scope>ACTIVITY REGULATION</scope>
    <scope>PATHWAY</scope>
    <scope>3D-STRUCTURE MODELING</scope>
    <scope>MUTAGENESIS OF ASP-185; VAL-186; SER-188; SER-273; LYS-318 AND ASP-341</scope>
    <source>
        <strain>ATCC 27294 / TMC 102 / H37Rv</strain>
    </source>
</reference>
<reference key="5">
    <citation type="journal article" date="2014" name="PLoS ONE">
        <title>Characterization of M. tuberculosis SerB2, an essential HAD-family phosphatase, reveals novel properties.</title>
        <authorList>
            <person name="Yadav G.P."/>
            <person name="Shree S."/>
            <person name="Maurya R."/>
            <person name="Rai N."/>
            <person name="Singh D.K."/>
            <person name="Srivastava K.K."/>
            <person name="Ramachandran R."/>
        </authorList>
    </citation>
    <scope>FUNCTION</scope>
    <scope>CATALYTIC ACTIVITY</scope>
    <scope>COFACTOR</scope>
    <scope>BIOPHYSICOCHEMICAL PROPERTIES</scope>
    <scope>SUBSTRATE SPECIFICITY</scope>
    <scope>ACTIVITY REGULATION</scope>
    <scope>SUBUNIT</scope>
    <scope>3D-STRUCTURE MODELING</scope>
    <scope>DOMAIN</scope>
    <scope>MUTAGENESIS OF GLY-18; GLY-108; ASP-185; ASP-187; SER-273; LYS-318; ASP-341 AND ASP-345</scope>
</reference>
<reference key="6">
    <citation type="journal article" date="2016" name="Cell. Mol. Life Sci.">
        <title>The M. tuberculosis HAD phosphatase (Rv3042c) interacts with host proteins and is inhibited by Clofazimine.</title>
        <authorList>
            <person name="Shree S."/>
            <person name="Singh A.K."/>
            <person name="Saxena R."/>
            <person name="Kumar H."/>
            <person name="Agarwal A."/>
            <person name="Sharma V.K."/>
            <person name="Srivastava K."/>
            <person name="Srivastava K.K."/>
            <person name="Sanyal S."/>
            <person name="Ramachandran R."/>
        </authorList>
    </citation>
    <scope>FUNCTION</scope>
    <scope>CATALYTIC ACTIVITY</scope>
    <scope>SUBCELLULAR LOCATION</scope>
    <scope>ACTIVITY REGULATION</scope>
    <scope>DRUG TARGET</scope>
    <scope>MUTAGENESIS OF ASP-341 AND ASP-345</scope>
</reference>